<gene>
    <name evidence="1" type="primary">murG</name>
    <name type="ordered locus">Bxeno_A3909</name>
    <name type="ORF">Bxe_A0486</name>
</gene>
<evidence type="ECO:0000255" key="1">
    <source>
        <dbReference type="HAMAP-Rule" id="MF_00033"/>
    </source>
</evidence>
<dbReference type="EC" id="2.4.1.227" evidence="1"/>
<dbReference type="EMBL" id="CP000270">
    <property type="protein sequence ID" value="ABE32447.1"/>
    <property type="molecule type" value="Genomic_DNA"/>
</dbReference>
<dbReference type="RefSeq" id="WP_011489917.1">
    <property type="nucleotide sequence ID" value="NC_007951.1"/>
</dbReference>
<dbReference type="SMR" id="Q13TZ2"/>
<dbReference type="STRING" id="266265.Bxe_A0486"/>
<dbReference type="CAZy" id="GT28">
    <property type="family name" value="Glycosyltransferase Family 28"/>
</dbReference>
<dbReference type="KEGG" id="bxb:DR64_2662"/>
<dbReference type="KEGG" id="bxe:Bxe_A0486"/>
<dbReference type="PATRIC" id="fig|266265.5.peg.4130"/>
<dbReference type="eggNOG" id="COG0707">
    <property type="taxonomic scope" value="Bacteria"/>
</dbReference>
<dbReference type="OrthoDB" id="9808936at2"/>
<dbReference type="UniPathway" id="UPA00219"/>
<dbReference type="Proteomes" id="UP000001817">
    <property type="component" value="Chromosome 1"/>
</dbReference>
<dbReference type="GO" id="GO:0005886">
    <property type="term" value="C:plasma membrane"/>
    <property type="evidence" value="ECO:0007669"/>
    <property type="project" value="UniProtKB-SubCell"/>
</dbReference>
<dbReference type="GO" id="GO:0051991">
    <property type="term" value="F:UDP-N-acetyl-D-glucosamine:N-acetylmuramoyl-L-alanyl-D-glutamyl-meso-2,6-diaminopimelyl-D-alanyl-D-alanine-diphosphoundecaprenol 4-beta-N-acetylglucosaminlytransferase activity"/>
    <property type="evidence" value="ECO:0007669"/>
    <property type="project" value="RHEA"/>
</dbReference>
<dbReference type="GO" id="GO:0050511">
    <property type="term" value="F:undecaprenyldiphospho-muramoylpentapeptide beta-N-acetylglucosaminyltransferase activity"/>
    <property type="evidence" value="ECO:0007669"/>
    <property type="project" value="UniProtKB-UniRule"/>
</dbReference>
<dbReference type="GO" id="GO:0005975">
    <property type="term" value="P:carbohydrate metabolic process"/>
    <property type="evidence" value="ECO:0007669"/>
    <property type="project" value="InterPro"/>
</dbReference>
<dbReference type="GO" id="GO:0051301">
    <property type="term" value="P:cell division"/>
    <property type="evidence" value="ECO:0007669"/>
    <property type="project" value="UniProtKB-KW"/>
</dbReference>
<dbReference type="GO" id="GO:0071555">
    <property type="term" value="P:cell wall organization"/>
    <property type="evidence" value="ECO:0007669"/>
    <property type="project" value="UniProtKB-KW"/>
</dbReference>
<dbReference type="GO" id="GO:0030259">
    <property type="term" value="P:lipid glycosylation"/>
    <property type="evidence" value="ECO:0007669"/>
    <property type="project" value="UniProtKB-UniRule"/>
</dbReference>
<dbReference type="GO" id="GO:0009252">
    <property type="term" value="P:peptidoglycan biosynthetic process"/>
    <property type="evidence" value="ECO:0007669"/>
    <property type="project" value="UniProtKB-UniRule"/>
</dbReference>
<dbReference type="GO" id="GO:0008360">
    <property type="term" value="P:regulation of cell shape"/>
    <property type="evidence" value="ECO:0007669"/>
    <property type="project" value="UniProtKB-KW"/>
</dbReference>
<dbReference type="CDD" id="cd03785">
    <property type="entry name" value="GT28_MurG"/>
    <property type="match status" value="1"/>
</dbReference>
<dbReference type="Gene3D" id="3.40.50.2000">
    <property type="entry name" value="Glycogen Phosphorylase B"/>
    <property type="match status" value="2"/>
</dbReference>
<dbReference type="HAMAP" id="MF_00033">
    <property type="entry name" value="MurG"/>
    <property type="match status" value="1"/>
</dbReference>
<dbReference type="InterPro" id="IPR006009">
    <property type="entry name" value="GlcNAc_MurG"/>
</dbReference>
<dbReference type="InterPro" id="IPR007235">
    <property type="entry name" value="Glyco_trans_28_C"/>
</dbReference>
<dbReference type="InterPro" id="IPR004276">
    <property type="entry name" value="GlycoTrans_28_N"/>
</dbReference>
<dbReference type="NCBIfam" id="TIGR01133">
    <property type="entry name" value="murG"/>
    <property type="match status" value="1"/>
</dbReference>
<dbReference type="PANTHER" id="PTHR21015:SF22">
    <property type="entry name" value="GLYCOSYLTRANSFERASE"/>
    <property type="match status" value="1"/>
</dbReference>
<dbReference type="PANTHER" id="PTHR21015">
    <property type="entry name" value="UDP-N-ACETYLGLUCOSAMINE--N-ACETYLMURAMYL-(PENTAPEPTIDE) PYROPHOSPHORYL-UNDECAPRENOL N-ACETYLGLUCOSAMINE TRANSFERASE 1"/>
    <property type="match status" value="1"/>
</dbReference>
<dbReference type="Pfam" id="PF04101">
    <property type="entry name" value="Glyco_tran_28_C"/>
    <property type="match status" value="1"/>
</dbReference>
<dbReference type="Pfam" id="PF03033">
    <property type="entry name" value="Glyco_transf_28"/>
    <property type="match status" value="1"/>
</dbReference>
<dbReference type="SUPFAM" id="SSF53756">
    <property type="entry name" value="UDP-Glycosyltransferase/glycogen phosphorylase"/>
    <property type="match status" value="1"/>
</dbReference>
<sequence>MTALPQRTLMVMAGGTGGHVFPGLAVAHLMQAWGWKVVWLGNPAGMEATLVPKHGIPMEYVRFGGLRGKGLKTKLMLPLNLLRACTQSLSVLRRVKPDVVLGMGGYITFPAGLMTALSGRPLVLHEQNSIAGLANKVLAKVAKRVLVAFPNALPHGEWTGNPIRAELAGAIAPKARYAQRSGPLNVLVVGGSLGAAALNEVVPRAVALLAPNERPRIVHQAGAKHIEALRENYAAAGLQAGADVELVPFIDDMTSAYANADLVICRSGAMTVSEISAVGVAALFVPFPYAVDDHQTTNAAFLADNGAALVVQQRDLSAETLADWLRSQTRETLAEMAERSRSLAKPDATEQVAQICATVAGSISGASPEGKQ</sequence>
<keyword id="KW-0131">Cell cycle</keyword>
<keyword id="KW-0132">Cell division</keyword>
<keyword id="KW-0997">Cell inner membrane</keyword>
<keyword id="KW-1003">Cell membrane</keyword>
<keyword id="KW-0133">Cell shape</keyword>
<keyword id="KW-0961">Cell wall biogenesis/degradation</keyword>
<keyword id="KW-0328">Glycosyltransferase</keyword>
<keyword id="KW-0472">Membrane</keyword>
<keyword id="KW-0573">Peptidoglycan synthesis</keyword>
<keyword id="KW-1185">Reference proteome</keyword>
<keyword id="KW-0808">Transferase</keyword>
<protein>
    <recommendedName>
        <fullName evidence="1">UDP-N-acetylglucosamine--N-acetylmuramyl-(pentapeptide) pyrophosphoryl-undecaprenol N-acetylglucosamine transferase</fullName>
        <ecNumber evidence="1">2.4.1.227</ecNumber>
    </recommendedName>
    <alternativeName>
        <fullName evidence="1">Undecaprenyl-PP-MurNAc-pentapeptide-UDPGlcNAc GlcNAc transferase</fullName>
    </alternativeName>
</protein>
<comment type="function">
    <text evidence="1">Cell wall formation. Catalyzes the transfer of a GlcNAc subunit on undecaprenyl-pyrophosphoryl-MurNAc-pentapeptide (lipid intermediate I) to form undecaprenyl-pyrophosphoryl-MurNAc-(pentapeptide)GlcNAc (lipid intermediate II).</text>
</comment>
<comment type="catalytic activity">
    <reaction evidence="1">
        <text>di-trans,octa-cis-undecaprenyl diphospho-N-acetyl-alpha-D-muramoyl-L-alanyl-D-glutamyl-meso-2,6-diaminopimeloyl-D-alanyl-D-alanine + UDP-N-acetyl-alpha-D-glucosamine = di-trans,octa-cis-undecaprenyl diphospho-[N-acetyl-alpha-D-glucosaminyl-(1-&gt;4)]-N-acetyl-alpha-D-muramoyl-L-alanyl-D-glutamyl-meso-2,6-diaminopimeloyl-D-alanyl-D-alanine + UDP + H(+)</text>
        <dbReference type="Rhea" id="RHEA:31227"/>
        <dbReference type="ChEBI" id="CHEBI:15378"/>
        <dbReference type="ChEBI" id="CHEBI:57705"/>
        <dbReference type="ChEBI" id="CHEBI:58223"/>
        <dbReference type="ChEBI" id="CHEBI:61387"/>
        <dbReference type="ChEBI" id="CHEBI:61388"/>
        <dbReference type="EC" id="2.4.1.227"/>
    </reaction>
</comment>
<comment type="pathway">
    <text evidence="1">Cell wall biogenesis; peptidoglycan biosynthesis.</text>
</comment>
<comment type="subcellular location">
    <subcellularLocation>
        <location evidence="1">Cell inner membrane</location>
        <topology evidence="1">Peripheral membrane protein</topology>
        <orientation evidence="1">Cytoplasmic side</orientation>
    </subcellularLocation>
</comment>
<comment type="similarity">
    <text evidence="1">Belongs to the glycosyltransferase 28 family. MurG subfamily.</text>
</comment>
<accession>Q13TZ2</accession>
<proteinExistence type="inferred from homology"/>
<organism>
    <name type="scientific">Paraburkholderia xenovorans (strain LB400)</name>
    <dbReference type="NCBI Taxonomy" id="266265"/>
    <lineage>
        <taxon>Bacteria</taxon>
        <taxon>Pseudomonadati</taxon>
        <taxon>Pseudomonadota</taxon>
        <taxon>Betaproteobacteria</taxon>
        <taxon>Burkholderiales</taxon>
        <taxon>Burkholderiaceae</taxon>
        <taxon>Paraburkholderia</taxon>
    </lineage>
</organism>
<feature type="chain" id="PRO_0000315078" description="UDP-N-acetylglucosamine--N-acetylmuramyl-(pentapeptide) pyrophosphoryl-undecaprenol N-acetylglucosamine transferase">
    <location>
        <begin position="1"/>
        <end position="372"/>
    </location>
</feature>
<feature type="binding site" evidence="1">
    <location>
        <begin position="16"/>
        <end position="18"/>
    </location>
    <ligand>
        <name>UDP-N-acetyl-alpha-D-glucosamine</name>
        <dbReference type="ChEBI" id="CHEBI:57705"/>
    </ligand>
</feature>
<feature type="binding site" evidence="1">
    <location>
        <position position="128"/>
    </location>
    <ligand>
        <name>UDP-N-acetyl-alpha-D-glucosamine</name>
        <dbReference type="ChEBI" id="CHEBI:57705"/>
    </ligand>
</feature>
<feature type="binding site" evidence="1">
    <location>
        <position position="164"/>
    </location>
    <ligand>
        <name>UDP-N-acetyl-alpha-D-glucosamine</name>
        <dbReference type="ChEBI" id="CHEBI:57705"/>
    </ligand>
</feature>
<feature type="binding site" evidence="1">
    <location>
        <position position="192"/>
    </location>
    <ligand>
        <name>UDP-N-acetyl-alpha-D-glucosamine</name>
        <dbReference type="ChEBI" id="CHEBI:57705"/>
    </ligand>
</feature>
<feature type="binding site" evidence="1">
    <location>
        <position position="250"/>
    </location>
    <ligand>
        <name>UDP-N-acetyl-alpha-D-glucosamine</name>
        <dbReference type="ChEBI" id="CHEBI:57705"/>
    </ligand>
</feature>
<feature type="binding site" evidence="1">
    <location>
        <position position="295"/>
    </location>
    <ligand>
        <name>UDP-N-acetyl-alpha-D-glucosamine</name>
        <dbReference type="ChEBI" id="CHEBI:57705"/>
    </ligand>
</feature>
<reference key="1">
    <citation type="journal article" date="2006" name="Proc. Natl. Acad. Sci. U.S.A.">
        <title>Burkholderia xenovorans LB400 harbors a multi-replicon, 9.73-Mbp genome shaped for versatility.</title>
        <authorList>
            <person name="Chain P.S.G."/>
            <person name="Denef V.J."/>
            <person name="Konstantinidis K.T."/>
            <person name="Vergez L.M."/>
            <person name="Agullo L."/>
            <person name="Reyes V.L."/>
            <person name="Hauser L."/>
            <person name="Cordova M."/>
            <person name="Gomez L."/>
            <person name="Gonzalez M."/>
            <person name="Land M."/>
            <person name="Lao V."/>
            <person name="Larimer F."/>
            <person name="LiPuma J.J."/>
            <person name="Mahenthiralingam E."/>
            <person name="Malfatti S.A."/>
            <person name="Marx C.J."/>
            <person name="Parnell J.J."/>
            <person name="Ramette A."/>
            <person name="Richardson P."/>
            <person name="Seeger M."/>
            <person name="Smith D."/>
            <person name="Spilker T."/>
            <person name="Sul W.J."/>
            <person name="Tsoi T.V."/>
            <person name="Ulrich L.E."/>
            <person name="Zhulin I.B."/>
            <person name="Tiedje J.M."/>
        </authorList>
    </citation>
    <scope>NUCLEOTIDE SEQUENCE [LARGE SCALE GENOMIC DNA]</scope>
    <source>
        <strain>LB400</strain>
    </source>
</reference>
<name>MURG_PARXL</name>